<protein>
    <recommendedName>
        <fullName evidence="1">Isocitrate dehydrogenase kinase/phosphatase</fullName>
        <shortName evidence="1">IDH kinase/phosphatase</shortName>
        <shortName evidence="1">IDHK/P</shortName>
        <ecNumber evidence="1">2.7.11.5</ecNumber>
        <ecNumber evidence="1">3.1.3.-</ecNumber>
    </recommendedName>
</protein>
<feature type="chain" id="PRO_1000046551" description="Isocitrate dehydrogenase kinase/phosphatase">
    <location>
        <begin position="1"/>
        <end position="606"/>
    </location>
</feature>
<feature type="active site" evidence="1">
    <location>
        <position position="383"/>
    </location>
</feature>
<feature type="binding site" evidence="1">
    <location>
        <begin position="327"/>
        <end position="333"/>
    </location>
    <ligand>
        <name>ATP</name>
        <dbReference type="ChEBI" id="CHEBI:30616"/>
    </ligand>
</feature>
<feature type="binding site" evidence="1">
    <location>
        <position position="348"/>
    </location>
    <ligand>
        <name>ATP</name>
        <dbReference type="ChEBI" id="CHEBI:30616"/>
    </ligand>
</feature>
<proteinExistence type="inferred from homology"/>
<comment type="function">
    <text evidence="1">Bifunctional enzyme which can phosphorylate or dephosphorylate isocitrate dehydrogenase (IDH) on a specific serine residue. This is a regulatory mechanism which enables bacteria to bypass the Krebs cycle via the glyoxylate shunt in response to the source of carbon. When bacteria are grown on glucose, IDH is fully active and unphosphorylated, but when grown on acetate or ethanol, the activity of IDH declines drastically concomitant with its phosphorylation.</text>
</comment>
<comment type="catalytic activity">
    <reaction evidence="1">
        <text>L-seryl-[isocitrate dehydrogenase] + ATP = O-phospho-L-seryl-[isocitrate dehydrogenase] + ADP + H(+)</text>
        <dbReference type="Rhea" id="RHEA:43540"/>
        <dbReference type="Rhea" id="RHEA-COMP:10605"/>
        <dbReference type="Rhea" id="RHEA-COMP:10606"/>
        <dbReference type="ChEBI" id="CHEBI:15378"/>
        <dbReference type="ChEBI" id="CHEBI:29999"/>
        <dbReference type="ChEBI" id="CHEBI:30616"/>
        <dbReference type="ChEBI" id="CHEBI:83421"/>
        <dbReference type="ChEBI" id="CHEBI:456216"/>
        <dbReference type="EC" id="2.7.11.5"/>
    </reaction>
</comment>
<comment type="subcellular location">
    <subcellularLocation>
        <location evidence="1">Cytoplasm</location>
    </subcellularLocation>
</comment>
<comment type="similarity">
    <text evidence="1">Belongs to the AceK family.</text>
</comment>
<keyword id="KW-0067">ATP-binding</keyword>
<keyword id="KW-0963">Cytoplasm</keyword>
<keyword id="KW-0329">Glyoxylate bypass</keyword>
<keyword id="KW-0378">Hydrolase</keyword>
<keyword id="KW-0418">Kinase</keyword>
<keyword id="KW-0547">Nucleotide-binding</keyword>
<keyword id="KW-0904">Protein phosphatase</keyword>
<keyword id="KW-0723">Serine/threonine-protein kinase</keyword>
<keyword id="KW-0808">Transferase</keyword>
<keyword id="KW-0816">Tricarboxylic acid cycle</keyword>
<sequence length="606" mass="70106">MNHFPKLLSSQIGFDIAQTMLEYFDRHYRIFREAAVEAKTLYERGDWHGLQRLARERITSYDERVKECVELLEDEYDAENIDDEVWQQIKLHYIGLLTSHRQPECAETFFNSVCCKILHRSYFNNDFIFVRPAISTEYLENDEPAAKPTYRAYYPGTDGLAATLERIVTNFQLEPPFEDLTRDIGCVMQAIDDEFGQFDAAPDFQIHVLSSLFFRNKSAYIIGRIINADRVLPFAMPIRHVRAGVLAVDTVLLRRELLQVIFSFSHSYFLVDMGVPSAYVDFLCTIMPGKPKAEIYTSVGLQKQGKNLFYRDLLHHLSHSSDRFIIAPGIKGLVMLVFTLPSFPYVFKIIKDHFPPPKETTRAQIMEKYQLVKRHDRLGRMADTLEYSSVALPLSRLDHALVRELEKEVPSLLEHEDDNLVIEHLYIERRMTPLNLYLQNGSDADIEHGVKEYGNAVKELMKANIFPGDMLYKNFGVTRHGRVVFYDYDEIEYLTDCNVRRVPAPRNEEDELSGEPWYTVGPHDIFPETYGPFLLGDPRVRTVFMKHHADFFDPALWQASKDKLLQGELPDFYPYDTSLRFCVRYAARFDATPDHDDGAGAAQRAA</sequence>
<evidence type="ECO:0000255" key="1">
    <source>
        <dbReference type="HAMAP-Rule" id="MF_00747"/>
    </source>
</evidence>
<gene>
    <name evidence="1" type="primary">aceK</name>
    <name type="ordered locus">Bcep1808_3021</name>
</gene>
<accession>A4JIA9</accession>
<name>ACEK_BURVG</name>
<reference key="1">
    <citation type="submission" date="2007-03" db="EMBL/GenBank/DDBJ databases">
        <title>Complete sequence of chromosome 1 of Burkholderia vietnamiensis G4.</title>
        <authorList>
            <consortium name="US DOE Joint Genome Institute"/>
            <person name="Copeland A."/>
            <person name="Lucas S."/>
            <person name="Lapidus A."/>
            <person name="Barry K."/>
            <person name="Detter J.C."/>
            <person name="Glavina del Rio T."/>
            <person name="Hammon N."/>
            <person name="Israni S."/>
            <person name="Dalin E."/>
            <person name="Tice H."/>
            <person name="Pitluck S."/>
            <person name="Chain P."/>
            <person name="Malfatti S."/>
            <person name="Shin M."/>
            <person name="Vergez L."/>
            <person name="Schmutz J."/>
            <person name="Larimer F."/>
            <person name="Land M."/>
            <person name="Hauser L."/>
            <person name="Kyrpides N."/>
            <person name="Tiedje J."/>
            <person name="Richardson P."/>
        </authorList>
    </citation>
    <scope>NUCLEOTIDE SEQUENCE [LARGE SCALE GENOMIC DNA]</scope>
    <source>
        <strain>G4 / LMG 22486</strain>
    </source>
</reference>
<organism>
    <name type="scientific">Burkholderia vietnamiensis (strain G4 / LMG 22486)</name>
    <name type="common">Burkholderia cepacia (strain R1808)</name>
    <dbReference type="NCBI Taxonomy" id="269482"/>
    <lineage>
        <taxon>Bacteria</taxon>
        <taxon>Pseudomonadati</taxon>
        <taxon>Pseudomonadota</taxon>
        <taxon>Betaproteobacteria</taxon>
        <taxon>Burkholderiales</taxon>
        <taxon>Burkholderiaceae</taxon>
        <taxon>Burkholderia</taxon>
        <taxon>Burkholderia cepacia complex</taxon>
    </lineage>
</organism>
<dbReference type="EC" id="2.7.11.5" evidence="1"/>
<dbReference type="EC" id="3.1.3.-" evidence="1"/>
<dbReference type="EMBL" id="CP000614">
    <property type="protein sequence ID" value="ABO56012.1"/>
    <property type="molecule type" value="Genomic_DNA"/>
</dbReference>
<dbReference type="SMR" id="A4JIA9"/>
<dbReference type="KEGG" id="bvi:Bcep1808_3021"/>
<dbReference type="eggNOG" id="COG4579">
    <property type="taxonomic scope" value="Bacteria"/>
</dbReference>
<dbReference type="HOGENOM" id="CLU_033804_1_1_4"/>
<dbReference type="Proteomes" id="UP000002287">
    <property type="component" value="Chromosome 1"/>
</dbReference>
<dbReference type="GO" id="GO:0005737">
    <property type="term" value="C:cytoplasm"/>
    <property type="evidence" value="ECO:0007669"/>
    <property type="project" value="UniProtKB-SubCell"/>
</dbReference>
<dbReference type="GO" id="GO:0008772">
    <property type="term" value="F:[isocitrate dehydrogenase (NADP+)] kinase activity"/>
    <property type="evidence" value="ECO:0007669"/>
    <property type="project" value="UniProtKB-UniRule"/>
</dbReference>
<dbReference type="GO" id="GO:0016208">
    <property type="term" value="F:AMP binding"/>
    <property type="evidence" value="ECO:0007669"/>
    <property type="project" value="TreeGrafter"/>
</dbReference>
<dbReference type="GO" id="GO:0005524">
    <property type="term" value="F:ATP binding"/>
    <property type="evidence" value="ECO:0007669"/>
    <property type="project" value="UniProtKB-UniRule"/>
</dbReference>
<dbReference type="GO" id="GO:0004721">
    <property type="term" value="F:phosphoprotein phosphatase activity"/>
    <property type="evidence" value="ECO:0007669"/>
    <property type="project" value="UniProtKB-KW"/>
</dbReference>
<dbReference type="GO" id="GO:0004674">
    <property type="term" value="F:protein serine/threonine kinase activity"/>
    <property type="evidence" value="ECO:0007669"/>
    <property type="project" value="UniProtKB-KW"/>
</dbReference>
<dbReference type="GO" id="GO:0006006">
    <property type="term" value="P:glucose metabolic process"/>
    <property type="evidence" value="ECO:0007669"/>
    <property type="project" value="InterPro"/>
</dbReference>
<dbReference type="GO" id="GO:0006097">
    <property type="term" value="P:glyoxylate cycle"/>
    <property type="evidence" value="ECO:0007669"/>
    <property type="project" value="UniProtKB-UniRule"/>
</dbReference>
<dbReference type="GO" id="GO:0006099">
    <property type="term" value="P:tricarboxylic acid cycle"/>
    <property type="evidence" value="ECO:0007669"/>
    <property type="project" value="UniProtKB-UniRule"/>
</dbReference>
<dbReference type="HAMAP" id="MF_00747">
    <property type="entry name" value="AceK"/>
    <property type="match status" value="1"/>
</dbReference>
<dbReference type="InterPro" id="IPR046855">
    <property type="entry name" value="AceK_kinase"/>
</dbReference>
<dbReference type="InterPro" id="IPR046854">
    <property type="entry name" value="AceK_regulatory"/>
</dbReference>
<dbReference type="InterPro" id="IPR010452">
    <property type="entry name" value="Isocitrate_DH_AceK"/>
</dbReference>
<dbReference type="NCBIfam" id="NF002804">
    <property type="entry name" value="PRK02946.1"/>
    <property type="match status" value="1"/>
</dbReference>
<dbReference type="PANTHER" id="PTHR39559">
    <property type="match status" value="1"/>
</dbReference>
<dbReference type="PANTHER" id="PTHR39559:SF1">
    <property type="entry name" value="ISOCITRATE DEHYDROGENASE KINASE_PHOSPHATASE"/>
    <property type="match status" value="1"/>
</dbReference>
<dbReference type="Pfam" id="PF06315">
    <property type="entry name" value="AceK_kinase"/>
    <property type="match status" value="1"/>
</dbReference>
<dbReference type="Pfam" id="PF20423">
    <property type="entry name" value="AceK_regulatory"/>
    <property type="match status" value="1"/>
</dbReference>
<dbReference type="PIRSF" id="PIRSF000719">
    <property type="entry name" value="AceK"/>
    <property type="match status" value="1"/>
</dbReference>